<feature type="chain" id="PRO_1000001874" description="Glutamate--tRNA ligase">
    <location>
        <begin position="1"/>
        <end position="466"/>
    </location>
</feature>
<feature type="short sequence motif" description="'HIGH' region" evidence="1">
    <location>
        <begin position="9"/>
        <end position="19"/>
    </location>
</feature>
<feature type="short sequence motif" description="'KMSKS' region" evidence="1">
    <location>
        <begin position="237"/>
        <end position="241"/>
    </location>
</feature>
<feature type="binding site" evidence="1">
    <location>
        <position position="240"/>
    </location>
    <ligand>
        <name>ATP</name>
        <dbReference type="ChEBI" id="CHEBI:30616"/>
    </ligand>
</feature>
<proteinExistence type="inferred from homology"/>
<keyword id="KW-0030">Aminoacyl-tRNA synthetase</keyword>
<keyword id="KW-0067">ATP-binding</keyword>
<keyword id="KW-0963">Cytoplasm</keyword>
<keyword id="KW-0436">Ligase</keyword>
<keyword id="KW-0547">Nucleotide-binding</keyword>
<keyword id="KW-0648">Protein biosynthesis</keyword>
<keyword id="KW-1185">Reference proteome</keyword>
<gene>
    <name evidence="1" type="primary">gltX</name>
    <name type="ordered locus">BCI_0456</name>
</gene>
<protein>
    <recommendedName>
        <fullName evidence="1">Glutamate--tRNA ligase</fullName>
        <ecNumber evidence="1">6.1.1.17</ecNumber>
    </recommendedName>
    <alternativeName>
        <fullName evidence="1">Glutamyl-tRNA synthetase</fullName>
        <shortName evidence="1">GluRS</shortName>
    </alternativeName>
</protein>
<comment type="function">
    <text evidence="1">Catalyzes the attachment of glutamate to tRNA(Glu) in a two-step reaction: glutamate is first activated by ATP to form Glu-AMP and then transferred to the acceptor end of tRNA(Glu).</text>
</comment>
<comment type="catalytic activity">
    <reaction evidence="1">
        <text>tRNA(Glu) + L-glutamate + ATP = L-glutamyl-tRNA(Glu) + AMP + diphosphate</text>
        <dbReference type="Rhea" id="RHEA:23540"/>
        <dbReference type="Rhea" id="RHEA-COMP:9663"/>
        <dbReference type="Rhea" id="RHEA-COMP:9680"/>
        <dbReference type="ChEBI" id="CHEBI:29985"/>
        <dbReference type="ChEBI" id="CHEBI:30616"/>
        <dbReference type="ChEBI" id="CHEBI:33019"/>
        <dbReference type="ChEBI" id="CHEBI:78442"/>
        <dbReference type="ChEBI" id="CHEBI:78520"/>
        <dbReference type="ChEBI" id="CHEBI:456215"/>
        <dbReference type="EC" id="6.1.1.17"/>
    </reaction>
</comment>
<comment type="subunit">
    <text evidence="1">Monomer.</text>
</comment>
<comment type="subcellular location">
    <subcellularLocation>
        <location evidence="1">Cytoplasm</location>
    </subcellularLocation>
</comment>
<comment type="similarity">
    <text evidence="1">Belongs to the class-I aminoacyl-tRNA synthetase family. Glutamate--tRNA ligase type 1 subfamily.</text>
</comment>
<sequence>MNIKTRFAPSPTGDLHVGSVRTALYSWLFARKNGGEFILRIEDTDIERSTQQAINAIIDSMKWLKIDWDQGPYFQTQNLDRYKEVINQLLKNGSAYKCYCSKKRLEELRNHQIINGKKPRYDGYCRNFDQTKIKNQPCVVRFRNPQQGYVIFNDLIRGKIKYNNQELDDLIICRTEGIPTYNFCVIIDDLDMKITHVIRGEDHLNNTPRQINILKAIGARVPEYAHLSMIIGHDGKKLSKRHSAVGVMQYRDQGFLPEALLNYLLRLGWSYGNQEIFSLDEMKKLFSLNTVKKSASLFDQQKLLWYNHFYIKTLSTDYIAQHLLFHLKQMGINPYMGPALADIVTLFRTRCKTIKDMASSCLYFYKDFEQFDHQAAIVYLKPVATKKLQTVQAKLTNQTNWTLESIQDILQQTAHELKVSMEAISMPLRVAVTGTSQSPAIDRIIHVIGKSRSLKRIDMALKYINI</sequence>
<name>SYE_BAUCH</name>
<organism>
    <name type="scientific">Baumannia cicadellinicola subsp. Homalodisca coagulata</name>
    <dbReference type="NCBI Taxonomy" id="374463"/>
    <lineage>
        <taxon>Bacteria</taxon>
        <taxon>Pseudomonadati</taxon>
        <taxon>Pseudomonadota</taxon>
        <taxon>Gammaproteobacteria</taxon>
        <taxon>Candidatus Palibaumannia</taxon>
    </lineage>
</organism>
<dbReference type="EC" id="6.1.1.17" evidence="1"/>
<dbReference type="EMBL" id="CP000238">
    <property type="protein sequence ID" value="ABF13944.1"/>
    <property type="molecule type" value="Genomic_DNA"/>
</dbReference>
<dbReference type="RefSeq" id="WP_011520629.1">
    <property type="nucleotide sequence ID" value="NC_007984.1"/>
</dbReference>
<dbReference type="SMR" id="Q1LT18"/>
<dbReference type="STRING" id="374463.BCI_0456"/>
<dbReference type="KEGG" id="bci:BCI_0456"/>
<dbReference type="HOGENOM" id="CLU_015768_6_0_6"/>
<dbReference type="OrthoDB" id="9807503at2"/>
<dbReference type="Proteomes" id="UP000002427">
    <property type="component" value="Chromosome"/>
</dbReference>
<dbReference type="GO" id="GO:0005829">
    <property type="term" value="C:cytosol"/>
    <property type="evidence" value="ECO:0007669"/>
    <property type="project" value="TreeGrafter"/>
</dbReference>
<dbReference type="GO" id="GO:0005524">
    <property type="term" value="F:ATP binding"/>
    <property type="evidence" value="ECO:0007669"/>
    <property type="project" value="UniProtKB-UniRule"/>
</dbReference>
<dbReference type="GO" id="GO:0004818">
    <property type="term" value="F:glutamate-tRNA ligase activity"/>
    <property type="evidence" value="ECO:0007669"/>
    <property type="project" value="UniProtKB-UniRule"/>
</dbReference>
<dbReference type="GO" id="GO:0000049">
    <property type="term" value="F:tRNA binding"/>
    <property type="evidence" value="ECO:0007669"/>
    <property type="project" value="InterPro"/>
</dbReference>
<dbReference type="GO" id="GO:0008270">
    <property type="term" value="F:zinc ion binding"/>
    <property type="evidence" value="ECO:0007669"/>
    <property type="project" value="InterPro"/>
</dbReference>
<dbReference type="GO" id="GO:0006424">
    <property type="term" value="P:glutamyl-tRNA aminoacylation"/>
    <property type="evidence" value="ECO:0007669"/>
    <property type="project" value="UniProtKB-UniRule"/>
</dbReference>
<dbReference type="CDD" id="cd00808">
    <property type="entry name" value="GluRS_core"/>
    <property type="match status" value="1"/>
</dbReference>
<dbReference type="FunFam" id="3.40.50.620:FF:000007">
    <property type="entry name" value="Glutamate--tRNA ligase"/>
    <property type="match status" value="1"/>
</dbReference>
<dbReference type="Gene3D" id="1.10.10.350">
    <property type="match status" value="1"/>
</dbReference>
<dbReference type="Gene3D" id="3.40.50.620">
    <property type="entry name" value="HUPs"/>
    <property type="match status" value="1"/>
</dbReference>
<dbReference type="HAMAP" id="MF_00022">
    <property type="entry name" value="Glu_tRNA_synth_type1"/>
    <property type="match status" value="1"/>
</dbReference>
<dbReference type="InterPro" id="IPR045462">
    <property type="entry name" value="aa-tRNA-synth_I_cd-bd"/>
</dbReference>
<dbReference type="InterPro" id="IPR020751">
    <property type="entry name" value="aa-tRNA-synth_I_codon-bd_sub2"/>
</dbReference>
<dbReference type="InterPro" id="IPR008925">
    <property type="entry name" value="aa_tRNA-synth_I_cd-bd_sf"/>
</dbReference>
<dbReference type="InterPro" id="IPR004527">
    <property type="entry name" value="Glu-tRNA-ligase_bac/mito"/>
</dbReference>
<dbReference type="InterPro" id="IPR000924">
    <property type="entry name" value="Glu/Gln-tRNA-synth"/>
</dbReference>
<dbReference type="InterPro" id="IPR020058">
    <property type="entry name" value="Glu/Gln-tRNA-synth_Ib_cat-dom"/>
</dbReference>
<dbReference type="InterPro" id="IPR049940">
    <property type="entry name" value="GluQ/Sye"/>
</dbReference>
<dbReference type="InterPro" id="IPR033910">
    <property type="entry name" value="GluRS_core"/>
</dbReference>
<dbReference type="InterPro" id="IPR014729">
    <property type="entry name" value="Rossmann-like_a/b/a_fold"/>
</dbReference>
<dbReference type="NCBIfam" id="TIGR00464">
    <property type="entry name" value="gltX_bact"/>
    <property type="match status" value="1"/>
</dbReference>
<dbReference type="PANTHER" id="PTHR43311">
    <property type="entry name" value="GLUTAMATE--TRNA LIGASE"/>
    <property type="match status" value="1"/>
</dbReference>
<dbReference type="PANTHER" id="PTHR43311:SF2">
    <property type="entry name" value="GLUTAMATE--TRNA LIGASE, MITOCHONDRIAL-RELATED"/>
    <property type="match status" value="1"/>
</dbReference>
<dbReference type="Pfam" id="PF19269">
    <property type="entry name" value="Anticodon_2"/>
    <property type="match status" value="1"/>
</dbReference>
<dbReference type="Pfam" id="PF00749">
    <property type="entry name" value="tRNA-synt_1c"/>
    <property type="match status" value="1"/>
</dbReference>
<dbReference type="PRINTS" id="PR00987">
    <property type="entry name" value="TRNASYNTHGLU"/>
</dbReference>
<dbReference type="SUPFAM" id="SSF48163">
    <property type="entry name" value="An anticodon-binding domain of class I aminoacyl-tRNA synthetases"/>
    <property type="match status" value="1"/>
</dbReference>
<dbReference type="SUPFAM" id="SSF52374">
    <property type="entry name" value="Nucleotidylyl transferase"/>
    <property type="match status" value="1"/>
</dbReference>
<reference key="1">
    <citation type="journal article" date="2006" name="PLoS Biol.">
        <title>Metabolic complementarity and genomics of the dual bacterial symbiosis of sharpshooters.</title>
        <authorList>
            <person name="Wu D."/>
            <person name="Daugherty S.C."/>
            <person name="Van Aken S.E."/>
            <person name="Pai G.H."/>
            <person name="Watkins K.L."/>
            <person name="Khouri H."/>
            <person name="Tallon L.J."/>
            <person name="Zaborsky J.M."/>
            <person name="Dunbar H.E."/>
            <person name="Tran P.L."/>
            <person name="Moran N.A."/>
            <person name="Eisen J.A."/>
        </authorList>
    </citation>
    <scope>NUCLEOTIDE SEQUENCE [LARGE SCALE GENOMIC DNA]</scope>
</reference>
<evidence type="ECO:0000255" key="1">
    <source>
        <dbReference type="HAMAP-Rule" id="MF_00022"/>
    </source>
</evidence>
<accession>Q1LT18</accession>